<accession>Q46WL4</accession>
<dbReference type="EC" id="4.2.1.19" evidence="1"/>
<dbReference type="EMBL" id="CP000090">
    <property type="protein sequence ID" value="AAZ62469.1"/>
    <property type="molecule type" value="Genomic_DNA"/>
</dbReference>
<dbReference type="SMR" id="Q46WL4"/>
<dbReference type="STRING" id="264198.Reut_A3109"/>
<dbReference type="KEGG" id="reu:Reut_A3109"/>
<dbReference type="eggNOG" id="COG0131">
    <property type="taxonomic scope" value="Bacteria"/>
</dbReference>
<dbReference type="HOGENOM" id="CLU_044308_2_0_4"/>
<dbReference type="OrthoDB" id="9790411at2"/>
<dbReference type="UniPathway" id="UPA00031">
    <property type="reaction ID" value="UER00011"/>
</dbReference>
<dbReference type="GO" id="GO:0005737">
    <property type="term" value="C:cytoplasm"/>
    <property type="evidence" value="ECO:0007669"/>
    <property type="project" value="UniProtKB-SubCell"/>
</dbReference>
<dbReference type="GO" id="GO:0004424">
    <property type="term" value="F:imidazoleglycerol-phosphate dehydratase activity"/>
    <property type="evidence" value="ECO:0007669"/>
    <property type="project" value="UniProtKB-UniRule"/>
</dbReference>
<dbReference type="GO" id="GO:0000105">
    <property type="term" value="P:L-histidine biosynthetic process"/>
    <property type="evidence" value="ECO:0007669"/>
    <property type="project" value="UniProtKB-UniRule"/>
</dbReference>
<dbReference type="CDD" id="cd07914">
    <property type="entry name" value="IGPD"/>
    <property type="match status" value="1"/>
</dbReference>
<dbReference type="FunFam" id="3.30.230.40:FF:000002">
    <property type="entry name" value="Imidazoleglycerol-phosphate dehydratase"/>
    <property type="match status" value="1"/>
</dbReference>
<dbReference type="FunFam" id="3.30.230.40:FF:000003">
    <property type="entry name" value="Imidazoleglycerol-phosphate dehydratase HisB"/>
    <property type="match status" value="1"/>
</dbReference>
<dbReference type="Gene3D" id="3.30.230.40">
    <property type="entry name" value="Imidazole glycerol phosphate dehydratase, domain 1"/>
    <property type="match status" value="2"/>
</dbReference>
<dbReference type="HAMAP" id="MF_00076">
    <property type="entry name" value="HisB"/>
    <property type="match status" value="1"/>
</dbReference>
<dbReference type="InterPro" id="IPR038494">
    <property type="entry name" value="IGPD_sf"/>
</dbReference>
<dbReference type="InterPro" id="IPR000807">
    <property type="entry name" value="ImidazoleglycerolP_deHydtase"/>
</dbReference>
<dbReference type="InterPro" id="IPR020565">
    <property type="entry name" value="ImidazoleglycerP_deHydtase_CS"/>
</dbReference>
<dbReference type="InterPro" id="IPR020568">
    <property type="entry name" value="Ribosomal_Su5_D2-typ_SF"/>
</dbReference>
<dbReference type="NCBIfam" id="NF002106">
    <property type="entry name" value="PRK00951.1-1"/>
    <property type="match status" value="1"/>
</dbReference>
<dbReference type="NCBIfam" id="NF002109">
    <property type="entry name" value="PRK00951.1-5"/>
    <property type="match status" value="1"/>
</dbReference>
<dbReference type="NCBIfam" id="NF002111">
    <property type="entry name" value="PRK00951.2-1"/>
    <property type="match status" value="1"/>
</dbReference>
<dbReference type="NCBIfam" id="NF002114">
    <property type="entry name" value="PRK00951.2-4"/>
    <property type="match status" value="1"/>
</dbReference>
<dbReference type="PANTHER" id="PTHR23133:SF2">
    <property type="entry name" value="IMIDAZOLEGLYCEROL-PHOSPHATE DEHYDRATASE"/>
    <property type="match status" value="1"/>
</dbReference>
<dbReference type="PANTHER" id="PTHR23133">
    <property type="entry name" value="IMIDAZOLEGLYCEROL-PHOSPHATE DEHYDRATASE HIS7"/>
    <property type="match status" value="1"/>
</dbReference>
<dbReference type="Pfam" id="PF00475">
    <property type="entry name" value="IGPD"/>
    <property type="match status" value="1"/>
</dbReference>
<dbReference type="SUPFAM" id="SSF54211">
    <property type="entry name" value="Ribosomal protein S5 domain 2-like"/>
    <property type="match status" value="2"/>
</dbReference>
<dbReference type="PROSITE" id="PS00954">
    <property type="entry name" value="IGP_DEHYDRATASE_1"/>
    <property type="match status" value="1"/>
</dbReference>
<dbReference type="PROSITE" id="PS00955">
    <property type="entry name" value="IGP_DEHYDRATASE_2"/>
    <property type="match status" value="1"/>
</dbReference>
<organism>
    <name type="scientific">Cupriavidus pinatubonensis (strain JMP 134 / LMG 1197)</name>
    <name type="common">Cupriavidus necator (strain JMP 134)</name>
    <dbReference type="NCBI Taxonomy" id="264198"/>
    <lineage>
        <taxon>Bacteria</taxon>
        <taxon>Pseudomonadati</taxon>
        <taxon>Pseudomonadota</taxon>
        <taxon>Betaproteobacteria</taxon>
        <taxon>Burkholderiales</taxon>
        <taxon>Burkholderiaceae</taxon>
        <taxon>Cupriavidus</taxon>
    </lineage>
</organism>
<proteinExistence type="inferred from homology"/>
<name>HIS7_CUPPJ</name>
<keyword id="KW-0028">Amino-acid biosynthesis</keyword>
<keyword id="KW-0963">Cytoplasm</keyword>
<keyword id="KW-0368">Histidine biosynthesis</keyword>
<keyword id="KW-0456">Lyase</keyword>
<reference key="1">
    <citation type="journal article" date="2010" name="PLoS ONE">
        <title>The complete multipartite genome sequence of Cupriavidus necator JMP134, a versatile pollutant degrader.</title>
        <authorList>
            <person name="Lykidis A."/>
            <person name="Perez-Pantoja D."/>
            <person name="Ledger T."/>
            <person name="Mavromatis K."/>
            <person name="Anderson I.J."/>
            <person name="Ivanova N.N."/>
            <person name="Hooper S.D."/>
            <person name="Lapidus A."/>
            <person name="Lucas S."/>
            <person name="Gonzalez B."/>
            <person name="Kyrpides N.C."/>
        </authorList>
    </citation>
    <scope>NUCLEOTIDE SEQUENCE [LARGE SCALE GENOMIC DNA]</scope>
    <source>
        <strain>JMP134 / LMG 1197</strain>
    </source>
</reference>
<sequence>MRVAEVTRNTSETQIRVSLNLDGTGRQKLASGVPFLDHMLDQIARHGMFDLEVEATGDTHIDDHHTVEDVGITLGQAVAKAIGDKKGITRYGHSYVPLDECLSRVVIDFSGRPGLEFHVPFTRARVGSFDVDLTIEFFRGFVNHAGVTLHIDNLRGINAHHQCETVFKAFGRALRMAVELDPRAANTIPSTKGTL</sequence>
<comment type="catalytic activity">
    <reaction evidence="1">
        <text>D-erythro-1-(imidazol-4-yl)glycerol 3-phosphate = 3-(imidazol-4-yl)-2-oxopropyl phosphate + H2O</text>
        <dbReference type="Rhea" id="RHEA:11040"/>
        <dbReference type="ChEBI" id="CHEBI:15377"/>
        <dbReference type="ChEBI" id="CHEBI:57766"/>
        <dbReference type="ChEBI" id="CHEBI:58278"/>
        <dbReference type="EC" id="4.2.1.19"/>
    </reaction>
</comment>
<comment type="pathway">
    <text evidence="1">Amino-acid biosynthesis; L-histidine biosynthesis; L-histidine from 5-phospho-alpha-D-ribose 1-diphosphate: step 6/9.</text>
</comment>
<comment type="subcellular location">
    <subcellularLocation>
        <location evidence="1">Cytoplasm</location>
    </subcellularLocation>
</comment>
<comment type="similarity">
    <text evidence="1">Belongs to the imidazoleglycerol-phosphate dehydratase family.</text>
</comment>
<feature type="chain" id="PRO_1000010339" description="Imidazoleglycerol-phosphate dehydratase">
    <location>
        <begin position="1"/>
        <end position="195"/>
    </location>
</feature>
<gene>
    <name evidence="1" type="primary">hisB</name>
    <name type="ordered locus">Reut_A3109</name>
</gene>
<evidence type="ECO:0000255" key="1">
    <source>
        <dbReference type="HAMAP-Rule" id="MF_00076"/>
    </source>
</evidence>
<protein>
    <recommendedName>
        <fullName evidence="1">Imidazoleglycerol-phosphate dehydratase</fullName>
        <shortName evidence="1">IGPD</shortName>
        <ecNumber evidence="1">4.2.1.19</ecNumber>
    </recommendedName>
</protein>